<dbReference type="EC" id="2.3.1.274" evidence="1"/>
<dbReference type="EMBL" id="CP000439">
    <property type="protein sequence ID" value="ABK90211.1"/>
    <property type="molecule type" value="Genomic_DNA"/>
</dbReference>
<dbReference type="RefSeq" id="WP_003034554.1">
    <property type="nucleotide sequence ID" value="NZ_CP009633.1"/>
</dbReference>
<dbReference type="SMR" id="A0Q7J6"/>
<dbReference type="GeneID" id="75264931"/>
<dbReference type="KEGG" id="ftn:FTN_1336"/>
<dbReference type="KEGG" id="ftx:AW25_667"/>
<dbReference type="BioCyc" id="FTUL401614:G1G75-1381-MONOMER"/>
<dbReference type="UniPathway" id="UPA00085"/>
<dbReference type="Proteomes" id="UP000000762">
    <property type="component" value="Chromosome"/>
</dbReference>
<dbReference type="GO" id="GO:0005737">
    <property type="term" value="C:cytoplasm"/>
    <property type="evidence" value="ECO:0007669"/>
    <property type="project" value="UniProtKB-SubCell"/>
</dbReference>
<dbReference type="GO" id="GO:0043811">
    <property type="term" value="F:phosphate:acyl-[acyl carrier protein] acyltransferase activity"/>
    <property type="evidence" value="ECO:0007669"/>
    <property type="project" value="UniProtKB-UniRule"/>
</dbReference>
<dbReference type="GO" id="GO:0006633">
    <property type="term" value="P:fatty acid biosynthetic process"/>
    <property type="evidence" value="ECO:0007669"/>
    <property type="project" value="UniProtKB-UniRule"/>
</dbReference>
<dbReference type="GO" id="GO:0008654">
    <property type="term" value="P:phospholipid biosynthetic process"/>
    <property type="evidence" value="ECO:0007669"/>
    <property type="project" value="UniProtKB-KW"/>
</dbReference>
<dbReference type="Gene3D" id="3.40.718.10">
    <property type="entry name" value="Isopropylmalate Dehydrogenase"/>
    <property type="match status" value="1"/>
</dbReference>
<dbReference type="HAMAP" id="MF_00019">
    <property type="entry name" value="PlsX"/>
    <property type="match status" value="1"/>
</dbReference>
<dbReference type="InterPro" id="IPR003664">
    <property type="entry name" value="FA_synthesis"/>
</dbReference>
<dbReference type="InterPro" id="IPR012281">
    <property type="entry name" value="Phospholipid_synth_PlsX-like"/>
</dbReference>
<dbReference type="NCBIfam" id="TIGR00182">
    <property type="entry name" value="plsX"/>
    <property type="match status" value="1"/>
</dbReference>
<dbReference type="PANTHER" id="PTHR30100">
    <property type="entry name" value="FATTY ACID/PHOSPHOLIPID SYNTHESIS PROTEIN PLSX"/>
    <property type="match status" value="1"/>
</dbReference>
<dbReference type="PANTHER" id="PTHR30100:SF1">
    <property type="entry name" value="PHOSPHATE ACYLTRANSFERASE"/>
    <property type="match status" value="1"/>
</dbReference>
<dbReference type="Pfam" id="PF02504">
    <property type="entry name" value="FA_synthesis"/>
    <property type="match status" value="1"/>
</dbReference>
<dbReference type="PIRSF" id="PIRSF002465">
    <property type="entry name" value="Phsphlp_syn_PlsX"/>
    <property type="match status" value="1"/>
</dbReference>
<dbReference type="SUPFAM" id="SSF53659">
    <property type="entry name" value="Isocitrate/Isopropylmalate dehydrogenase-like"/>
    <property type="match status" value="1"/>
</dbReference>
<sequence>MGYKISIDAMGGDHGLNTTIPAALEAVKKDSNLQIVLVGDHHKVKRALDRYSKVKKIKLPVLQRIAIHHASETVGMDESPSIAVRKKKDSSMRVAINLVKDRTVDACVSAGNTGALMATSKFVLKTINGVDRPAIVYALPAFNRETKQLSKTYMLDLGANVVCTSEQLFQFAIMGSILAASSKGIAEPRVSLLNIGEEEMKGLDNIKNAAKLLQGCDFINYNGYIEGKYIFDDTTDVIVCDGFVGNVSLKTMEGSLRLIESLIKKTIQESSLLMKIPIVMALPIFKKMKKGMNLDSFNGASLLGLTGIVVKSHGGASANAFETAIYEAIKEIKYNIPKTIQESLEKVL</sequence>
<gene>
    <name evidence="1" type="primary">plsX</name>
    <name type="ordered locus">FTN_1336</name>
</gene>
<keyword id="KW-0963">Cytoplasm</keyword>
<keyword id="KW-0444">Lipid biosynthesis</keyword>
<keyword id="KW-0443">Lipid metabolism</keyword>
<keyword id="KW-0594">Phospholipid biosynthesis</keyword>
<keyword id="KW-1208">Phospholipid metabolism</keyword>
<keyword id="KW-0808">Transferase</keyword>
<feature type="chain" id="PRO_1000001763" description="Phosphate acyltransferase">
    <location>
        <begin position="1"/>
        <end position="348"/>
    </location>
</feature>
<accession>A0Q7J6</accession>
<comment type="function">
    <text evidence="1">Catalyzes the reversible formation of acyl-phosphate (acyl-PO(4)) from acyl-[acyl-carrier-protein] (acyl-ACP). This enzyme utilizes acyl-ACP as fatty acyl donor, but not acyl-CoA.</text>
</comment>
<comment type="catalytic activity">
    <reaction evidence="1">
        <text>a fatty acyl-[ACP] + phosphate = an acyl phosphate + holo-[ACP]</text>
        <dbReference type="Rhea" id="RHEA:42292"/>
        <dbReference type="Rhea" id="RHEA-COMP:9685"/>
        <dbReference type="Rhea" id="RHEA-COMP:14125"/>
        <dbReference type="ChEBI" id="CHEBI:43474"/>
        <dbReference type="ChEBI" id="CHEBI:59918"/>
        <dbReference type="ChEBI" id="CHEBI:64479"/>
        <dbReference type="ChEBI" id="CHEBI:138651"/>
        <dbReference type="EC" id="2.3.1.274"/>
    </reaction>
</comment>
<comment type="pathway">
    <text evidence="1">Lipid metabolism; phospholipid metabolism.</text>
</comment>
<comment type="subunit">
    <text evidence="1">Homodimer. Probably interacts with PlsY.</text>
</comment>
<comment type="subcellular location">
    <subcellularLocation>
        <location evidence="1">Cytoplasm</location>
    </subcellularLocation>
    <text evidence="1">Associated with the membrane possibly through PlsY.</text>
</comment>
<comment type="similarity">
    <text evidence="1">Belongs to the PlsX family.</text>
</comment>
<evidence type="ECO:0000255" key="1">
    <source>
        <dbReference type="HAMAP-Rule" id="MF_00019"/>
    </source>
</evidence>
<proteinExistence type="inferred from homology"/>
<name>PLSX_FRATN</name>
<organism>
    <name type="scientific">Francisella tularensis subsp. novicida (strain U112)</name>
    <dbReference type="NCBI Taxonomy" id="401614"/>
    <lineage>
        <taxon>Bacteria</taxon>
        <taxon>Pseudomonadati</taxon>
        <taxon>Pseudomonadota</taxon>
        <taxon>Gammaproteobacteria</taxon>
        <taxon>Thiotrichales</taxon>
        <taxon>Francisellaceae</taxon>
        <taxon>Francisella</taxon>
    </lineage>
</organism>
<protein>
    <recommendedName>
        <fullName evidence="1">Phosphate acyltransferase</fullName>
        <ecNumber evidence="1">2.3.1.274</ecNumber>
    </recommendedName>
    <alternativeName>
        <fullName evidence="1">Acyl-ACP phosphotransacylase</fullName>
    </alternativeName>
    <alternativeName>
        <fullName evidence="1">Acyl-[acyl-carrier-protein]--phosphate acyltransferase</fullName>
    </alternativeName>
    <alternativeName>
        <fullName evidence="1">Phosphate-acyl-ACP acyltransferase</fullName>
    </alternativeName>
</protein>
<reference key="1">
    <citation type="journal article" date="2007" name="Genome Biol.">
        <title>Comparison of Francisella tularensis genomes reveals evolutionary events associated with the emergence of human pathogenic strains.</title>
        <authorList>
            <person name="Rohmer L."/>
            <person name="Fong C."/>
            <person name="Abmayr S."/>
            <person name="Wasnick M."/>
            <person name="Larson Freeman T.J."/>
            <person name="Radey M."/>
            <person name="Guina T."/>
            <person name="Svensson K."/>
            <person name="Hayden H.S."/>
            <person name="Jacobs M."/>
            <person name="Gallagher L.A."/>
            <person name="Manoil C."/>
            <person name="Ernst R.K."/>
            <person name="Drees B."/>
            <person name="Buckley D."/>
            <person name="Haugen E."/>
            <person name="Bovee D."/>
            <person name="Zhou Y."/>
            <person name="Chang J."/>
            <person name="Levy R."/>
            <person name="Lim R."/>
            <person name="Gillett W."/>
            <person name="Guenthener D."/>
            <person name="Kang A."/>
            <person name="Shaffer S.A."/>
            <person name="Taylor G."/>
            <person name="Chen J."/>
            <person name="Gallis B."/>
            <person name="D'Argenio D.A."/>
            <person name="Forsman M."/>
            <person name="Olson M.V."/>
            <person name="Goodlett D.R."/>
            <person name="Kaul R."/>
            <person name="Miller S.I."/>
            <person name="Brittnacher M.J."/>
        </authorList>
    </citation>
    <scope>NUCLEOTIDE SEQUENCE [LARGE SCALE GENOMIC DNA]</scope>
    <source>
        <strain>U112</strain>
    </source>
</reference>